<comment type="function">
    <text evidence="3">Odorant receptor.</text>
</comment>
<comment type="subcellular location">
    <subcellularLocation>
        <location>Cell membrane</location>
        <topology>Multi-pass membrane protein</topology>
    </subcellularLocation>
</comment>
<comment type="similarity">
    <text evidence="2">Belongs to the G-protein coupled receptor 1 family.</text>
</comment>
<comment type="online information" name="Human Olfactory Receptor Data Exploratorium (HORDE)">
    <link uri="http://genome.weizmann.ac.il/horde/card/index/symbol:OR2T27"/>
</comment>
<gene>
    <name type="primary">OR2T27</name>
</gene>
<protein>
    <recommendedName>
        <fullName>Olfactory receptor 2T27</fullName>
    </recommendedName>
    <alternativeName>
        <fullName>Olfactory receptor OR1-67</fullName>
    </alternativeName>
</protein>
<organism>
    <name type="scientific">Homo sapiens</name>
    <name type="common">Human</name>
    <dbReference type="NCBI Taxonomy" id="9606"/>
    <lineage>
        <taxon>Eukaryota</taxon>
        <taxon>Metazoa</taxon>
        <taxon>Chordata</taxon>
        <taxon>Craniata</taxon>
        <taxon>Vertebrata</taxon>
        <taxon>Euteleostomi</taxon>
        <taxon>Mammalia</taxon>
        <taxon>Eutheria</taxon>
        <taxon>Euarchontoglires</taxon>
        <taxon>Primates</taxon>
        <taxon>Haplorrhini</taxon>
        <taxon>Catarrhini</taxon>
        <taxon>Hominidae</taxon>
        <taxon>Homo</taxon>
    </lineage>
</organism>
<proteinExistence type="inferred from homology"/>
<sequence length="317" mass="35514">MEQSNYSVYADFILLGLFSNARFPWLLFALILLVFLTSIASNVVKIILIHIDSRLHTPMYFLLSQLSLRDILYISTIVPKMLVDQVMSQRAISFAGCTAQHFLYLTLAGAEFFLLGLMSYDRYVAICNPLHYPVLMSRKICWLIVAAAWLGGSIDGFLLTPVTMQFPFCASREINHFFCEVPALLKLSCTDTSAYETAMYVCCIMMLLIPFSVISGSYTRILITVYRMSEAEGRGKAVATCSSHMVVVSLFYGAAMYTYVLPHSYHTPEQDKAVSAFYTILTPMLNPLIYSLRNKDVTGALQKVVGRCVSSGKVTTF</sequence>
<dbReference type="EMBL" id="AB065611">
    <property type="protein sequence ID" value="BAC05838.1"/>
    <property type="molecule type" value="Genomic_DNA"/>
</dbReference>
<dbReference type="EMBL" id="BK004474">
    <property type="protein sequence ID" value="DAA04872.1"/>
    <property type="molecule type" value="Genomic_DNA"/>
</dbReference>
<dbReference type="CCDS" id="CCDS31124.1"/>
<dbReference type="RefSeq" id="NP_001001824.1">
    <property type="nucleotide sequence ID" value="NM_001001824.2"/>
</dbReference>
<dbReference type="RefSeq" id="NP_001372989.1">
    <property type="nucleotide sequence ID" value="NM_001386060.1"/>
</dbReference>
<dbReference type="SMR" id="Q8NH04"/>
<dbReference type="FunCoup" id="Q8NH04">
    <property type="interactions" value="523"/>
</dbReference>
<dbReference type="STRING" id="9606.ENSP00000493434"/>
<dbReference type="GlyCosmos" id="Q8NH04">
    <property type="glycosylation" value="1 site, No reported glycans"/>
</dbReference>
<dbReference type="GlyGen" id="Q8NH04">
    <property type="glycosylation" value="1 site"/>
</dbReference>
<dbReference type="iPTMnet" id="Q8NH04"/>
<dbReference type="PhosphoSitePlus" id="Q8NH04"/>
<dbReference type="BioMuta" id="OR2T27"/>
<dbReference type="DMDM" id="73621333"/>
<dbReference type="MassIVE" id="Q8NH04"/>
<dbReference type="PaxDb" id="9606-ENSP00000342008"/>
<dbReference type="ProteomicsDB" id="73640"/>
<dbReference type="Antibodypedia" id="57448">
    <property type="antibodies" value="67 antibodies from 17 providers"/>
</dbReference>
<dbReference type="DNASU" id="403239"/>
<dbReference type="Ensembl" id="ENST00000460972.4">
    <property type="protein sequence ID" value="ENSP00000493412.1"/>
    <property type="gene ID" value="ENSG00000187701.5"/>
</dbReference>
<dbReference type="Ensembl" id="ENST00000641652.1">
    <property type="protein sequence ID" value="ENSP00000493434.1"/>
    <property type="gene ID" value="ENSG00000187701.5"/>
</dbReference>
<dbReference type="GeneID" id="403239"/>
<dbReference type="KEGG" id="hsa:403239"/>
<dbReference type="MANE-Select" id="ENST00000460972.4">
    <property type="protein sequence ID" value="ENSP00000493412.1"/>
    <property type="RefSeq nucleotide sequence ID" value="NM_001001824.2"/>
    <property type="RefSeq protein sequence ID" value="NP_001001824.1"/>
</dbReference>
<dbReference type="UCSC" id="uc010pzo.2">
    <property type="organism name" value="human"/>
</dbReference>
<dbReference type="AGR" id="HGNC:31252"/>
<dbReference type="CTD" id="403239"/>
<dbReference type="GeneCards" id="OR2T27"/>
<dbReference type="HGNC" id="HGNC:31252">
    <property type="gene designation" value="OR2T27"/>
</dbReference>
<dbReference type="HPA" id="ENSG00000187701">
    <property type="expression patterns" value="Not detected"/>
</dbReference>
<dbReference type="neXtProt" id="NX_Q8NH04"/>
<dbReference type="PharmGKB" id="PA134945560"/>
<dbReference type="VEuPathDB" id="HostDB:ENSG00000187701"/>
<dbReference type="eggNOG" id="ENOG502SMQD">
    <property type="taxonomic scope" value="Eukaryota"/>
</dbReference>
<dbReference type="GeneTree" id="ENSGT01130000278260"/>
<dbReference type="HOGENOM" id="CLU_012526_1_2_1"/>
<dbReference type="InParanoid" id="Q8NH04"/>
<dbReference type="OMA" id="STYETAM"/>
<dbReference type="OrthoDB" id="10017003at2759"/>
<dbReference type="PAN-GO" id="Q8NH04">
    <property type="GO annotations" value="0 GO annotations based on evolutionary models"/>
</dbReference>
<dbReference type="PhylomeDB" id="Q8NH04"/>
<dbReference type="TreeFam" id="TF337295"/>
<dbReference type="PathwayCommons" id="Q8NH04"/>
<dbReference type="Reactome" id="R-HSA-9752946">
    <property type="pathway name" value="Expression and translocation of olfactory receptors"/>
</dbReference>
<dbReference type="SignaLink" id="Q8NH04"/>
<dbReference type="BioGRID-ORCS" id="403239">
    <property type="hits" value="13 hits in 658 CRISPR screens"/>
</dbReference>
<dbReference type="GeneWiki" id="OR2T27"/>
<dbReference type="GenomeRNAi" id="403239"/>
<dbReference type="Pharos" id="Q8NH04">
    <property type="development level" value="Tdark"/>
</dbReference>
<dbReference type="PRO" id="PR:Q8NH04"/>
<dbReference type="Proteomes" id="UP000005640">
    <property type="component" value="Chromosome 1"/>
</dbReference>
<dbReference type="RNAct" id="Q8NH04">
    <property type="molecule type" value="protein"/>
</dbReference>
<dbReference type="GO" id="GO:0005886">
    <property type="term" value="C:plasma membrane"/>
    <property type="evidence" value="ECO:0000318"/>
    <property type="project" value="GO_Central"/>
</dbReference>
<dbReference type="GO" id="GO:0004930">
    <property type="term" value="F:G protein-coupled receptor activity"/>
    <property type="evidence" value="ECO:0007669"/>
    <property type="project" value="UniProtKB-KW"/>
</dbReference>
<dbReference type="GO" id="GO:0004984">
    <property type="term" value="F:olfactory receptor activity"/>
    <property type="evidence" value="ECO:0000318"/>
    <property type="project" value="GO_Central"/>
</dbReference>
<dbReference type="GO" id="GO:0050911">
    <property type="term" value="P:detection of chemical stimulus involved in sensory perception of smell"/>
    <property type="evidence" value="ECO:0000318"/>
    <property type="project" value="GO_Central"/>
</dbReference>
<dbReference type="CDD" id="cd15421">
    <property type="entry name" value="7tmA_OR2T-like"/>
    <property type="match status" value="1"/>
</dbReference>
<dbReference type="FunFam" id="1.20.1070.10:FF:000008">
    <property type="entry name" value="Olfactory receptor"/>
    <property type="match status" value="1"/>
</dbReference>
<dbReference type="Gene3D" id="1.20.1070.10">
    <property type="entry name" value="Rhodopsin 7-helix transmembrane proteins"/>
    <property type="match status" value="1"/>
</dbReference>
<dbReference type="InterPro" id="IPR000276">
    <property type="entry name" value="GPCR_Rhodpsn"/>
</dbReference>
<dbReference type="InterPro" id="IPR017452">
    <property type="entry name" value="GPCR_Rhodpsn_7TM"/>
</dbReference>
<dbReference type="InterPro" id="IPR000725">
    <property type="entry name" value="Olfact_rcpt"/>
</dbReference>
<dbReference type="PANTHER" id="PTHR26453">
    <property type="entry name" value="OLFACTORY RECEPTOR"/>
    <property type="match status" value="1"/>
</dbReference>
<dbReference type="Pfam" id="PF13853">
    <property type="entry name" value="7tm_4"/>
    <property type="match status" value="1"/>
</dbReference>
<dbReference type="PRINTS" id="PR00237">
    <property type="entry name" value="GPCRRHODOPSN"/>
</dbReference>
<dbReference type="PRINTS" id="PR00245">
    <property type="entry name" value="OLFACTORYR"/>
</dbReference>
<dbReference type="SUPFAM" id="SSF81321">
    <property type="entry name" value="Family A G protein-coupled receptor-like"/>
    <property type="match status" value="1"/>
</dbReference>
<dbReference type="PROSITE" id="PS00237">
    <property type="entry name" value="G_PROTEIN_RECEP_F1_1"/>
    <property type="match status" value="1"/>
</dbReference>
<dbReference type="PROSITE" id="PS50262">
    <property type="entry name" value="G_PROTEIN_RECEP_F1_2"/>
    <property type="match status" value="1"/>
</dbReference>
<feature type="chain" id="PRO_0000150505" description="Olfactory receptor 2T27">
    <location>
        <begin position="1"/>
        <end position="317"/>
    </location>
</feature>
<feature type="topological domain" description="Extracellular" evidence="1">
    <location>
        <begin position="1"/>
        <end position="22"/>
    </location>
</feature>
<feature type="transmembrane region" description="Helical; Name=1" evidence="1">
    <location>
        <begin position="23"/>
        <end position="43"/>
    </location>
</feature>
<feature type="topological domain" description="Cytoplasmic" evidence="1">
    <location>
        <begin position="44"/>
        <end position="60"/>
    </location>
</feature>
<feature type="transmembrane region" description="Helical; Name=2" evidence="1">
    <location>
        <begin position="61"/>
        <end position="83"/>
    </location>
</feature>
<feature type="topological domain" description="Extracellular" evidence="1">
    <location>
        <begin position="84"/>
        <end position="97"/>
    </location>
</feature>
<feature type="transmembrane region" description="Helical; Name=3" evidence="1">
    <location>
        <begin position="98"/>
        <end position="118"/>
    </location>
</feature>
<feature type="topological domain" description="Cytoplasmic" evidence="1">
    <location>
        <begin position="119"/>
        <end position="139"/>
    </location>
</feature>
<feature type="transmembrane region" description="Helical; Name=4" evidence="1">
    <location>
        <begin position="140"/>
        <end position="160"/>
    </location>
</feature>
<feature type="topological domain" description="Extracellular" evidence="1">
    <location>
        <begin position="161"/>
        <end position="197"/>
    </location>
</feature>
<feature type="transmembrane region" description="Helical; Name=5" evidence="1">
    <location>
        <begin position="198"/>
        <end position="218"/>
    </location>
</feature>
<feature type="topological domain" description="Cytoplasmic" evidence="1">
    <location>
        <begin position="219"/>
        <end position="244"/>
    </location>
</feature>
<feature type="transmembrane region" description="Helical; Name=6" evidence="1">
    <location>
        <begin position="245"/>
        <end position="265"/>
    </location>
</feature>
<feature type="topological domain" description="Extracellular" evidence="1">
    <location>
        <begin position="266"/>
        <end position="271"/>
    </location>
</feature>
<feature type="transmembrane region" description="Helical; Name=7" evidence="1">
    <location>
        <begin position="272"/>
        <end position="292"/>
    </location>
</feature>
<feature type="topological domain" description="Cytoplasmic" evidence="1">
    <location>
        <begin position="293"/>
        <end position="317"/>
    </location>
</feature>
<feature type="glycosylation site" description="N-linked (GlcNAc...) asparagine" evidence="1">
    <location>
        <position position="5"/>
    </location>
</feature>
<feature type="disulfide bond" evidence="2">
    <location>
        <begin position="97"/>
        <end position="189"/>
    </location>
</feature>
<feature type="sequence variant" id="VAR_053158" description="In dbSNP:rs1782242.">
    <original>L</original>
    <variation>V</variation>
    <location>
        <position position="36"/>
    </location>
</feature>
<feature type="sequence variant" id="VAR_062030" description="In dbSNP:rs28533004.">
    <original>K</original>
    <variation>M</variation>
    <location>
        <position position="45"/>
    </location>
</feature>
<evidence type="ECO:0000255" key="1"/>
<evidence type="ECO:0000255" key="2">
    <source>
        <dbReference type="PROSITE-ProRule" id="PRU00521"/>
    </source>
</evidence>
<evidence type="ECO:0000305" key="3"/>
<name>O2T27_HUMAN</name>
<accession>Q8NH04</accession>
<keyword id="KW-1003">Cell membrane</keyword>
<keyword id="KW-1015">Disulfide bond</keyword>
<keyword id="KW-0297">G-protein coupled receptor</keyword>
<keyword id="KW-0325">Glycoprotein</keyword>
<keyword id="KW-0472">Membrane</keyword>
<keyword id="KW-0552">Olfaction</keyword>
<keyword id="KW-0675">Receptor</keyword>
<keyword id="KW-1185">Reference proteome</keyword>
<keyword id="KW-0716">Sensory transduction</keyword>
<keyword id="KW-0807">Transducer</keyword>
<keyword id="KW-0812">Transmembrane</keyword>
<keyword id="KW-1133">Transmembrane helix</keyword>
<reference key="1">
    <citation type="submission" date="2001-07" db="EMBL/GenBank/DDBJ databases">
        <title>Genome-wide discovery and analysis of human seven transmembrane helix receptor genes.</title>
        <authorList>
            <person name="Suwa M."/>
            <person name="Sato T."/>
            <person name="Okouchi I."/>
            <person name="Arita M."/>
            <person name="Futami K."/>
            <person name="Matsumoto S."/>
            <person name="Tsutsumi S."/>
            <person name="Aburatani H."/>
            <person name="Asai K."/>
            <person name="Akiyama Y."/>
        </authorList>
    </citation>
    <scope>NUCLEOTIDE SEQUENCE [GENOMIC DNA]</scope>
</reference>
<reference key="2">
    <citation type="journal article" date="2004" name="Proc. Natl. Acad. Sci. U.S.A.">
        <title>The human olfactory receptor gene family.</title>
        <authorList>
            <person name="Malnic B."/>
            <person name="Godfrey P.A."/>
            <person name="Buck L.B."/>
        </authorList>
    </citation>
    <scope>IDENTIFICATION</scope>
</reference>
<reference key="3">
    <citation type="journal article" date="2004" name="Proc. Natl. Acad. Sci. U.S.A.">
        <authorList>
            <person name="Malnic B."/>
            <person name="Godfrey P.A."/>
            <person name="Buck L.B."/>
        </authorList>
    </citation>
    <scope>ERRATUM OF PUBMED:14983052</scope>
</reference>